<feature type="chain" id="PRO_0000047166" description="Krueppel-like factor 3">
    <location>
        <begin position="1"/>
        <end position="344"/>
    </location>
</feature>
<feature type="zinc finger region" description="C2H2-type 1" evidence="2">
    <location>
        <begin position="259"/>
        <end position="283"/>
    </location>
</feature>
<feature type="zinc finger region" description="C2H2-type 2" evidence="2">
    <location>
        <begin position="289"/>
        <end position="313"/>
    </location>
</feature>
<feature type="zinc finger region" description="C2H2-type 3" evidence="2">
    <location>
        <begin position="319"/>
        <end position="341"/>
    </location>
</feature>
<feature type="region of interest" description="Repressor domain">
    <location>
        <begin position="1"/>
        <end position="74"/>
    </location>
</feature>
<feature type="region of interest" description="Disordered" evidence="3">
    <location>
        <begin position="66"/>
        <end position="111"/>
    </location>
</feature>
<feature type="region of interest" description="Disordered" evidence="3">
    <location>
        <begin position="235"/>
        <end position="254"/>
    </location>
</feature>
<feature type="short sequence motif" description="9aaTAD; inactive" evidence="1">
    <location>
        <begin position="60"/>
        <end position="68"/>
    </location>
</feature>
<feature type="short sequence motif" description="CTBP-binding motif">
    <location>
        <begin position="61"/>
        <end position="65"/>
    </location>
</feature>
<feature type="compositionally biased region" description="Low complexity" evidence="3">
    <location>
        <begin position="70"/>
        <end position="81"/>
    </location>
</feature>
<feature type="compositionally biased region" description="Low complexity" evidence="3">
    <location>
        <begin position="91"/>
        <end position="107"/>
    </location>
</feature>
<feature type="modified residue" description="Phosphoserine" evidence="1">
    <location>
        <position position="71"/>
    </location>
</feature>
<feature type="modified residue" description="Phosphoserine" evidence="8">
    <location>
        <position position="91"/>
    </location>
</feature>
<feature type="modified residue" description="Phosphoserine" evidence="8">
    <location>
        <position position="100"/>
    </location>
</feature>
<feature type="modified residue" description="Phosphoserine" evidence="8">
    <location>
        <position position="107"/>
    </location>
</feature>
<feature type="modified residue" description="Phosphoserine" evidence="8">
    <location>
        <position position="110"/>
    </location>
</feature>
<feature type="modified residue" description="Phosphoserine" evidence="8">
    <location>
        <position position="215"/>
    </location>
</feature>
<feature type="modified residue" description="Phosphoserine" evidence="8">
    <location>
        <position position="223"/>
    </location>
</feature>
<feature type="modified residue" description="Phosphoserine" evidence="1">
    <location>
        <position position="249"/>
    </location>
</feature>
<feature type="cross-link" description="Glycyl lysine isopeptide (Lys-Gly) (interchain with G-Cter in SUMO)" evidence="5">
    <location>
        <position position="10"/>
    </location>
</feature>
<feature type="cross-link" description="Glycyl lysine isopeptide (Lys-Gly) (interchain with G-Cter in SUMO2)" evidence="1">
    <location>
        <position position="68"/>
    </location>
</feature>
<feature type="cross-link" description="Glycyl lysine isopeptide (Lys-Gly) (interchain with G-Cter in SUMO2)" evidence="1">
    <location>
        <position position="195"/>
    </location>
</feature>
<feature type="cross-link" description="Glycyl lysine isopeptide (Lys-Gly) (interchain with G-Cter in SUMO); alternate">
    <location>
        <position position="197"/>
    </location>
</feature>
<feature type="cross-link" description="Glycyl lysine isopeptide (Lys-Gly) (interchain with G-Cter in SUMO2); alternate" evidence="1">
    <location>
        <position position="197"/>
    </location>
</feature>
<feature type="mutagenesis site" description="Reduced sumoylation levels. No effect on DNA-binding and slight reduction of transcriptional repression. Abolishes sumoylation. No effect on DNA-binding but great reduction in transcriptional repression; when associated with A-197." evidence="5">
    <original>K</original>
    <variation>A</variation>
    <location>
        <position position="10"/>
    </location>
</feature>
<feature type="mutagenesis site" description="Slight reduction of transcriptional repression. Great reduction of transcriptional repression; when associated with A-199." evidence="5">
    <original>E</original>
    <variation>A</variation>
    <location>
        <position position="12"/>
    </location>
</feature>
<feature type="mutagenesis site" description="Reduced sumoylation levels. No effect on DNA-binding and slight reduction of transcriptional repression. Abolishes sumoylation. No effect on DNA-binding but great reduction of transcriptional repression; when associated with A-10." evidence="5">
    <original>K</original>
    <variation>A</variation>
    <location>
        <position position="197"/>
    </location>
</feature>
<feature type="mutagenesis site" description="Slight reduction of transcriptional repression. Great reduction of transcriptional repression; when associated with A-199." evidence="5">
    <original>E</original>
    <variation>A</variation>
    <location>
        <position position="199"/>
    </location>
</feature>
<feature type="mutagenesis site" description="Little change in DNA-binding ability." evidence="4">
    <original>H</original>
    <variation>A</variation>
    <variation>D</variation>
    <variation>E</variation>
    <variation>N</variation>
    <variation>Q</variation>
    <variation>R</variation>
    <location>
        <position position="341"/>
    </location>
</feature>
<feature type="strand" evidence="9">
    <location>
        <begin position="316"/>
        <end position="319"/>
    </location>
</feature>
<feature type="turn" evidence="9">
    <location>
        <begin position="322"/>
        <end position="324"/>
    </location>
</feature>
<feature type="strand" evidence="9">
    <location>
        <begin position="328"/>
        <end position="330"/>
    </location>
</feature>
<feature type="helix" evidence="9">
    <location>
        <begin position="331"/>
        <end position="338"/>
    </location>
</feature>
<feature type="helix" evidence="9">
    <location>
        <begin position="339"/>
        <end position="341"/>
    </location>
</feature>
<keyword id="KW-0002">3D-structure</keyword>
<keyword id="KW-0010">Activator</keyword>
<keyword id="KW-0238">DNA-binding</keyword>
<keyword id="KW-1017">Isopeptide bond</keyword>
<keyword id="KW-0479">Metal-binding</keyword>
<keyword id="KW-0539">Nucleus</keyword>
<keyword id="KW-0597">Phosphoprotein</keyword>
<keyword id="KW-1185">Reference proteome</keyword>
<keyword id="KW-0677">Repeat</keyword>
<keyword id="KW-0678">Repressor</keyword>
<keyword id="KW-0804">Transcription</keyword>
<keyword id="KW-0805">Transcription regulation</keyword>
<keyword id="KW-0832">Ubl conjugation</keyword>
<keyword id="KW-0862">Zinc</keyword>
<keyword id="KW-0863">Zinc-finger</keyword>
<accession>Q60980</accession>
<sequence length="344" mass="38561">MLMFDPVPVKQEAMDPVSVSFPSNYIESMKPNKYGVIYSTPLPDKFFQTPEGLTHGIQVEPVDLTVNKRGSPPAAGGSPSSLKFPSHRRASPGLSMPSSSPPIKKYSPPSPGVQPFGVPLSMPPVMAAALSRHGIRSPGILPVIQPVVVQPVPFMYTSHLQQPLMVSLSEEMDNSNSGMPVPVIESYEKPLLQKKIKIEPGIEPQRTDYYPEEMSPPLMNPVSPPQALLQENHPSVIVQPGKRPLPVESPDTQRKRRIHRCDYDGCNKVYTKSSHLKAHRRTHTGEKPYKCTWEGCTWKFARSDELTRHFRKHTGIKPFQCPDCDRSFSRSDHLALHRKRHMLV</sequence>
<comment type="function">
    <text evidence="5 6">Binds to the CACCC box of erythroid cell-expressed genes. May play a role in hematopoiesis.</text>
</comment>
<comment type="subunit">
    <text evidence="4">Monomer.</text>
</comment>
<comment type="subcellular location">
    <subcellularLocation>
        <location evidence="7">Nucleus</location>
    </subcellularLocation>
</comment>
<comment type="tissue specificity">
    <text evidence="6">In 8.5 day embryos, expressed in midbrain, anterior hindbrain and ventral forebrain. In 9 day embryos, expressed throughout ventral anterior half of embryo including midbrain-hindbrain junction, ventral midbrain, diencephalon and forebrain. At 10.5 days, distribution is more widespread with expression also found in developing limb buds. Widely expressed in the adult.</text>
</comment>
<comment type="domain">
    <text evidence="1">The 9aaTAD motif is a transactivation domain present in a large number of yeast and animal transcription factors. In KLF3, the motif is inactive.</text>
</comment>
<comment type="PTM">
    <text evidence="5">Sumoylated with SUMO1. Sumoylation is enhanced by PIAS1, PIAS2alpha and PIAS2beta, and PIAS4, but not by Pc2. Enhances transcriptional repression, but has no effect on DNA binding. Sumoylation on Lys-197 is the major site.</text>
</comment>
<comment type="similarity">
    <text evidence="7">Belongs to the krueppel C2H2-type zinc-finger protein family.</text>
</comment>
<organism>
    <name type="scientific">Mus musculus</name>
    <name type="common">Mouse</name>
    <dbReference type="NCBI Taxonomy" id="10090"/>
    <lineage>
        <taxon>Eukaryota</taxon>
        <taxon>Metazoa</taxon>
        <taxon>Chordata</taxon>
        <taxon>Craniata</taxon>
        <taxon>Vertebrata</taxon>
        <taxon>Euteleostomi</taxon>
        <taxon>Mammalia</taxon>
        <taxon>Eutheria</taxon>
        <taxon>Euarchontoglires</taxon>
        <taxon>Glires</taxon>
        <taxon>Rodentia</taxon>
        <taxon>Myomorpha</taxon>
        <taxon>Muroidea</taxon>
        <taxon>Muridae</taxon>
        <taxon>Murinae</taxon>
        <taxon>Mus</taxon>
        <taxon>Mus</taxon>
    </lineage>
</organism>
<evidence type="ECO:0000250" key="1">
    <source>
        <dbReference type="UniProtKB" id="P57682"/>
    </source>
</evidence>
<evidence type="ECO:0000255" key="2">
    <source>
        <dbReference type="PROSITE-ProRule" id="PRU00042"/>
    </source>
</evidence>
<evidence type="ECO:0000256" key="3">
    <source>
        <dbReference type="SAM" id="MobiDB-lite"/>
    </source>
</evidence>
<evidence type="ECO:0000269" key="4">
    <source>
    </source>
</evidence>
<evidence type="ECO:0000269" key="5">
    <source>
    </source>
</evidence>
<evidence type="ECO:0000269" key="6">
    <source>
    </source>
</evidence>
<evidence type="ECO:0000305" key="7"/>
<evidence type="ECO:0007744" key="8">
    <source>
    </source>
</evidence>
<evidence type="ECO:0007829" key="9">
    <source>
        <dbReference type="PDB" id="1P7A"/>
    </source>
</evidence>
<reference key="1">
    <citation type="journal article" date="1996" name="Mol. Cell. Biol.">
        <title>Isolation and characterization of the cDNA encoding BKLF/TEF-2, a major CACCC-box-binding protein in erythroid cells and selected other cells.</title>
        <authorList>
            <person name="Crossley M."/>
            <person name="Whitelaw E."/>
            <person name="Perkins A."/>
            <person name="Williams G."/>
            <person name="Fujiwara Y."/>
            <person name="Orkin S.H."/>
        </authorList>
    </citation>
    <scope>NUCLEOTIDE SEQUENCE [MRNA]</scope>
    <scope>FUNCTION</scope>
    <scope>TISSUE SPECIFICITY</scope>
    <source>
        <strain>DBA</strain>
        <tissue>Leukemia</tissue>
    </source>
</reference>
<reference key="2">
    <citation type="journal article" date="2005" name="Mol. Cell. Biol.">
        <title>Role for SUMO modification in facilitating transcriptional repression by BKLF.</title>
        <authorList>
            <person name="Perdomo J."/>
            <person name="Verger A."/>
            <person name="Turner J."/>
            <person name="Crossley M."/>
        </authorList>
    </citation>
    <scope>SUMOYLATION AT LYS-10 AND LYS-197</scope>
    <scope>FUNCTION</scope>
    <scope>MUTAGENESIS OF LYS-10; GLU-12; LYS-197 AND GLU-199</scope>
</reference>
<reference key="3">
    <citation type="journal article" date="2010" name="Cell">
        <title>A tissue-specific atlas of mouse protein phosphorylation and expression.</title>
        <authorList>
            <person name="Huttlin E.L."/>
            <person name="Jedrychowski M.P."/>
            <person name="Elias J.E."/>
            <person name="Goswami T."/>
            <person name="Rad R."/>
            <person name="Beausoleil S.A."/>
            <person name="Villen J."/>
            <person name="Haas W."/>
            <person name="Sowa M.E."/>
            <person name="Gygi S.P."/>
        </authorList>
    </citation>
    <scope>PHOSPHORYLATION [LARGE SCALE ANALYSIS] AT SER-91; SER-100; SER-107; SER-110; SER-215 AND SER-223</scope>
    <scope>IDENTIFICATION BY MASS SPECTROMETRY [LARGE SCALE ANALYSIS]</scope>
    <source>
        <tissue>Brain</tissue>
        <tissue>Brown adipose tissue</tissue>
        <tissue>Kidney</tissue>
        <tissue>Lung</tissue>
        <tissue>Pancreas</tissue>
        <tissue>Spleen</tissue>
    </source>
</reference>
<reference key="4">
    <citation type="journal article" date="2003" name="J. Biol. Chem.">
        <title>CCHX zinc finger derivatives retain the ability to bind Zn(II) and mediate protein-DNA interactions.</title>
        <authorList>
            <person name="Simpson R.J.Y."/>
            <person name="Cram E.D."/>
            <person name="Czolij R."/>
            <person name="Matthews J.M."/>
            <person name="Crossley M."/>
            <person name="Mackay J.P."/>
        </authorList>
    </citation>
    <scope>STRUCTURE BY NMR OF 314-344 OF WILD TYPE AND MUTANT FORMS</scope>
    <scope>SUBUNIT</scope>
    <scope>DNA-BINDING</scope>
    <scope>MUTAGENESIS OF HIS-341</scope>
</reference>
<name>KLF3_MOUSE</name>
<dbReference type="EMBL" id="U36340">
    <property type="protein sequence ID" value="AAA93256.1"/>
    <property type="molecule type" value="mRNA"/>
</dbReference>
<dbReference type="CCDS" id="CCDS19301.1"/>
<dbReference type="PIR" id="JC6100">
    <property type="entry name" value="JC6100"/>
</dbReference>
<dbReference type="RefSeq" id="NP_032479.1">
    <property type="nucleotide sequence ID" value="NM_008453.6"/>
</dbReference>
<dbReference type="RefSeq" id="XP_006503814.1">
    <property type="nucleotide sequence ID" value="XM_006503751.5"/>
</dbReference>
<dbReference type="PDB" id="1P7A">
    <property type="method" value="NMR"/>
    <property type="chains" value="A=314-344"/>
</dbReference>
<dbReference type="PDB" id="1U85">
    <property type="method" value="NMR"/>
    <property type="chains" value="A=314-344"/>
</dbReference>
<dbReference type="PDB" id="1U86">
    <property type="method" value="NMR"/>
    <property type="chains" value="A=314-344"/>
</dbReference>
<dbReference type="PDBsum" id="1P7A"/>
<dbReference type="PDBsum" id="1U85"/>
<dbReference type="PDBsum" id="1U86"/>
<dbReference type="SMR" id="Q60980"/>
<dbReference type="BioGRID" id="200965">
    <property type="interactions" value="4"/>
</dbReference>
<dbReference type="FunCoup" id="Q60980">
    <property type="interactions" value="1014"/>
</dbReference>
<dbReference type="STRING" id="10090.ENSMUSP00000129363"/>
<dbReference type="GlyGen" id="Q60980">
    <property type="glycosylation" value="1 site, 1 O-linked glycan (1 site)"/>
</dbReference>
<dbReference type="iPTMnet" id="Q60980"/>
<dbReference type="PhosphoSitePlus" id="Q60980"/>
<dbReference type="jPOST" id="Q60980"/>
<dbReference type="PaxDb" id="10090-ENSMUSP00000129363"/>
<dbReference type="ProteomicsDB" id="269223"/>
<dbReference type="Pumba" id="Q60980"/>
<dbReference type="Antibodypedia" id="10444">
    <property type="antibodies" value="179 antibodies from 28 providers"/>
</dbReference>
<dbReference type="DNASU" id="16599"/>
<dbReference type="Ensembl" id="ENSMUST00000165536.8">
    <property type="protein sequence ID" value="ENSMUSP00000129363.2"/>
    <property type="gene ID" value="ENSMUSG00000029178.16"/>
</dbReference>
<dbReference type="GeneID" id="16599"/>
<dbReference type="KEGG" id="mmu:16599"/>
<dbReference type="UCSC" id="uc008xmr.1">
    <property type="organism name" value="mouse"/>
</dbReference>
<dbReference type="AGR" id="MGI:1342773"/>
<dbReference type="CTD" id="51274"/>
<dbReference type="MGI" id="MGI:1342773">
    <property type="gene designation" value="Klf3"/>
</dbReference>
<dbReference type="VEuPathDB" id="HostDB:ENSMUSG00000029178"/>
<dbReference type="eggNOG" id="KOG1721">
    <property type="taxonomic scope" value="Eukaryota"/>
</dbReference>
<dbReference type="GeneTree" id="ENSGT00940000157456"/>
<dbReference type="HOGENOM" id="CLU_002678_33_0_1"/>
<dbReference type="InParanoid" id="Q60980"/>
<dbReference type="OMA" id="FMYASHL"/>
<dbReference type="OrthoDB" id="4748970at2759"/>
<dbReference type="PhylomeDB" id="Q60980"/>
<dbReference type="TreeFam" id="TF350556"/>
<dbReference type="BioGRID-ORCS" id="16599">
    <property type="hits" value="6 hits in 79 CRISPR screens"/>
</dbReference>
<dbReference type="ChiTaRS" id="Klf3">
    <property type="organism name" value="mouse"/>
</dbReference>
<dbReference type="EvolutionaryTrace" id="Q60980"/>
<dbReference type="PRO" id="PR:Q60980"/>
<dbReference type="Proteomes" id="UP000000589">
    <property type="component" value="Chromosome 5"/>
</dbReference>
<dbReference type="RNAct" id="Q60980">
    <property type="molecule type" value="protein"/>
</dbReference>
<dbReference type="Bgee" id="ENSMUSG00000029178">
    <property type="expression patterns" value="Expressed in tail skin and 259 other cell types or tissues"/>
</dbReference>
<dbReference type="ExpressionAtlas" id="Q60980">
    <property type="expression patterns" value="baseline and differential"/>
</dbReference>
<dbReference type="GO" id="GO:0005654">
    <property type="term" value="C:nucleoplasm"/>
    <property type="evidence" value="ECO:0007669"/>
    <property type="project" value="Ensembl"/>
</dbReference>
<dbReference type="GO" id="GO:0003677">
    <property type="term" value="F:DNA binding"/>
    <property type="evidence" value="ECO:0000250"/>
    <property type="project" value="MGI"/>
</dbReference>
<dbReference type="GO" id="GO:0001227">
    <property type="term" value="F:DNA-binding transcription repressor activity, RNA polymerase II-specific"/>
    <property type="evidence" value="ECO:0000305"/>
    <property type="project" value="NTNU_SB"/>
</dbReference>
<dbReference type="GO" id="GO:0000977">
    <property type="term" value="F:RNA polymerase II transcription regulatory region sequence-specific DNA binding"/>
    <property type="evidence" value="ECO:0000314"/>
    <property type="project" value="NTNU_SB"/>
</dbReference>
<dbReference type="GO" id="GO:0008270">
    <property type="term" value="F:zinc ion binding"/>
    <property type="evidence" value="ECO:0007669"/>
    <property type="project" value="UniProtKB-KW"/>
</dbReference>
<dbReference type="GO" id="GO:1901653">
    <property type="term" value="P:cellular response to peptide"/>
    <property type="evidence" value="ECO:0007669"/>
    <property type="project" value="Ensembl"/>
</dbReference>
<dbReference type="GO" id="GO:0000122">
    <property type="term" value="P:negative regulation of transcription by RNA polymerase II"/>
    <property type="evidence" value="ECO:0000315"/>
    <property type="project" value="NTNU_SB"/>
</dbReference>
<dbReference type="CDD" id="cd21577">
    <property type="entry name" value="KLF3_N"/>
    <property type="match status" value="1"/>
</dbReference>
<dbReference type="FunFam" id="3.30.160.60:FF:000021">
    <property type="entry name" value="Basic krueppel-like factor 3"/>
    <property type="match status" value="1"/>
</dbReference>
<dbReference type="FunFam" id="3.30.160.60:FF:000018">
    <property type="entry name" value="Krueppel-like factor 15"/>
    <property type="match status" value="1"/>
</dbReference>
<dbReference type="FunFam" id="3.30.160.60:FF:000563">
    <property type="entry name" value="Krueppel-like factor 8"/>
    <property type="match status" value="1"/>
</dbReference>
<dbReference type="Gene3D" id="3.30.160.60">
    <property type="entry name" value="Classic Zinc Finger"/>
    <property type="match status" value="3"/>
</dbReference>
<dbReference type="InterPro" id="IPR036236">
    <property type="entry name" value="Znf_C2H2_sf"/>
</dbReference>
<dbReference type="InterPro" id="IPR013087">
    <property type="entry name" value="Znf_C2H2_type"/>
</dbReference>
<dbReference type="PANTHER" id="PTHR23235:SF48">
    <property type="entry name" value="KRUEPPEL-LIKE FACTOR 3"/>
    <property type="match status" value="1"/>
</dbReference>
<dbReference type="PANTHER" id="PTHR23235">
    <property type="entry name" value="KRUEPPEL-LIKE TRANSCRIPTION FACTOR"/>
    <property type="match status" value="1"/>
</dbReference>
<dbReference type="Pfam" id="PF00096">
    <property type="entry name" value="zf-C2H2"/>
    <property type="match status" value="3"/>
</dbReference>
<dbReference type="SMART" id="SM00355">
    <property type="entry name" value="ZnF_C2H2"/>
    <property type="match status" value="3"/>
</dbReference>
<dbReference type="SUPFAM" id="SSF57667">
    <property type="entry name" value="beta-beta-alpha zinc fingers"/>
    <property type="match status" value="2"/>
</dbReference>
<dbReference type="PROSITE" id="PS00028">
    <property type="entry name" value="ZINC_FINGER_C2H2_1"/>
    <property type="match status" value="3"/>
</dbReference>
<dbReference type="PROSITE" id="PS50157">
    <property type="entry name" value="ZINC_FINGER_C2H2_2"/>
    <property type="match status" value="3"/>
</dbReference>
<protein>
    <recommendedName>
        <fullName>Krueppel-like factor 3</fullName>
    </recommendedName>
    <alternativeName>
        <fullName>Basic krueppel-like factor</fullName>
    </alternativeName>
    <alternativeName>
        <fullName>CACCC-box-binding protein BKLF</fullName>
    </alternativeName>
    <alternativeName>
        <fullName>TEF-2</fullName>
    </alternativeName>
</protein>
<gene>
    <name type="primary">Klf3</name>
    <name type="synonym">Bklf</name>
</gene>
<proteinExistence type="evidence at protein level"/>